<gene>
    <name evidence="1" type="primary">sucC</name>
    <name type="ordered locus">EC55989_0711</name>
</gene>
<evidence type="ECO:0000255" key="1">
    <source>
        <dbReference type="HAMAP-Rule" id="MF_00558"/>
    </source>
</evidence>
<keyword id="KW-0067">ATP-binding</keyword>
<keyword id="KW-0436">Ligase</keyword>
<keyword id="KW-0460">Magnesium</keyword>
<keyword id="KW-0479">Metal-binding</keyword>
<keyword id="KW-0547">Nucleotide-binding</keyword>
<keyword id="KW-1185">Reference proteome</keyword>
<keyword id="KW-0816">Tricarboxylic acid cycle</keyword>
<proteinExistence type="inferred from homology"/>
<dbReference type="EC" id="6.2.1.5" evidence="1"/>
<dbReference type="EMBL" id="CU928145">
    <property type="protein sequence ID" value="CAU96581.1"/>
    <property type="molecule type" value="Genomic_DNA"/>
</dbReference>
<dbReference type="RefSeq" id="WP_001048602.1">
    <property type="nucleotide sequence ID" value="NZ_CP028304.1"/>
</dbReference>
<dbReference type="SMR" id="B7LAD4"/>
<dbReference type="GeneID" id="93776757"/>
<dbReference type="KEGG" id="eck:EC55989_0711"/>
<dbReference type="HOGENOM" id="CLU_037430_4_0_6"/>
<dbReference type="UniPathway" id="UPA00223">
    <property type="reaction ID" value="UER00999"/>
</dbReference>
<dbReference type="Proteomes" id="UP000000746">
    <property type="component" value="Chromosome"/>
</dbReference>
<dbReference type="GO" id="GO:0005829">
    <property type="term" value="C:cytosol"/>
    <property type="evidence" value="ECO:0007669"/>
    <property type="project" value="TreeGrafter"/>
</dbReference>
<dbReference type="GO" id="GO:0042709">
    <property type="term" value="C:succinate-CoA ligase complex"/>
    <property type="evidence" value="ECO:0007669"/>
    <property type="project" value="TreeGrafter"/>
</dbReference>
<dbReference type="GO" id="GO:0005524">
    <property type="term" value="F:ATP binding"/>
    <property type="evidence" value="ECO:0007669"/>
    <property type="project" value="UniProtKB-UniRule"/>
</dbReference>
<dbReference type="GO" id="GO:0000287">
    <property type="term" value="F:magnesium ion binding"/>
    <property type="evidence" value="ECO:0007669"/>
    <property type="project" value="UniProtKB-UniRule"/>
</dbReference>
<dbReference type="GO" id="GO:0004775">
    <property type="term" value="F:succinate-CoA ligase (ADP-forming) activity"/>
    <property type="evidence" value="ECO:0007669"/>
    <property type="project" value="UniProtKB-UniRule"/>
</dbReference>
<dbReference type="GO" id="GO:0004776">
    <property type="term" value="F:succinate-CoA ligase (GDP-forming) activity"/>
    <property type="evidence" value="ECO:0007669"/>
    <property type="project" value="RHEA"/>
</dbReference>
<dbReference type="GO" id="GO:0006104">
    <property type="term" value="P:succinyl-CoA metabolic process"/>
    <property type="evidence" value="ECO:0007669"/>
    <property type="project" value="TreeGrafter"/>
</dbReference>
<dbReference type="GO" id="GO:0006099">
    <property type="term" value="P:tricarboxylic acid cycle"/>
    <property type="evidence" value="ECO:0007669"/>
    <property type="project" value="UniProtKB-UniRule"/>
</dbReference>
<dbReference type="FunFam" id="3.30.1490.20:FF:000002">
    <property type="entry name" value="Succinate--CoA ligase [ADP-forming] subunit beta"/>
    <property type="match status" value="1"/>
</dbReference>
<dbReference type="FunFam" id="3.30.470.20:FF:000002">
    <property type="entry name" value="Succinate--CoA ligase [ADP-forming] subunit beta"/>
    <property type="match status" value="1"/>
</dbReference>
<dbReference type="FunFam" id="3.40.50.261:FF:000001">
    <property type="entry name" value="Succinate--CoA ligase [ADP-forming] subunit beta"/>
    <property type="match status" value="1"/>
</dbReference>
<dbReference type="Gene3D" id="3.30.1490.20">
    <property type="entry name" value="ATP-grasp fold, A domain"/>
    <property type="match status" value="1"/>
</dbReference>
<dbReference type="Gene3D" id="3.30.470.20">
    <property type="entry name" value="ATP-grasp fold, B domain"/>
    <property type="match status" value="1"/>
</dbReference>
<dbReference type="Gene3D" id="3.40.50.261">
    <property type="entry name" value="Succinyl-CoA synthetase domains"/>
    <property type="match status" value="1"/>
</dbReference>
<dbReference type="HAMAP" id="MF_00558">
    <property type="entry name" value="Succ_CoA_beta"/>
    <property type="match status" value="1"/>
</dbReference>
<dbReference type="InterPro" id="IPR011761">
    <property type="entry name" value="ATP-grasp"/>
</dbReference>
<dbReference type="InterPro" id="IPR013650">
    <property type="entry name" value="ATP-grasp_succ-CoA_synth-type"/>
</dbReference>
<dbReference type="InterPro" id="IPR013815">
    <property type="entry name" value="ATP_grasp_subdomain_1"/>
</dbReference>
<dbReference type="InterPro" id="IPR017866">
    <property type="entry name" value="Succ-CoA_synthase_bsu_CS"/>
</dbReference>
<dbReference type="InterPro" id="IPR005811">
    <property type="entry name" value="SUCC_ACL_C"/>
</dbReference>
<dbReference type="InterPro" id="IPR005809">
    <property type="entry name" value="Succ_CoA_ligase-like_bsu"/>
</dbReference>
<dbReference type="InterPro" id="IPR016102">
    <property type="entry name" value="Succinyl-CoA_synth-like"/>
</dbReference>
<dbReference type="NCBIfam" id="NF001913">
    <property type="entry name" value="PRK00696.1"/>
    <property type="match status" value="1"/>
</dbReference>
<dbReference type="NCBIfam" id="TIGR01016">
    <property type="entry name" value="sucCoAbeta"/>
    <property type="match status" value="1"/>
</dbReference>
<dbReference type="PANTHER" id="PTHR11815:SF10">
    <property type="entry name" value="SUCCINATE--COA LIGASE [GDP-FORMING] SUBUNIT BETA, MITOCHONDRIAL"/>
    <property type="match status" value="1"/>
</dbReference>
<dbReference type="PANTHER" id="PTHR11815">
    <property type="entry name" value="SUCCINYL-COA SYNTHETASE BETA CHAIN"/>
    <property type="match status" value="1"/>
</dbReference>
<dbReference type="Pfam" id="PF08442">
    <property type="entry name" value="ATP-grasp_2"/>
    <property type="match status" value="1"/>
</dbReference>
<dbReference type="Pfam" id="PF00549">
    <property type="entry name" value="Ligase_CoA"/>
    <property type="match status" value="1"/>
</dbReference>
<dbReference type="PIRSF" id="PIRSF001554">
    <property type="entry name" value="SucCS_beta"/>
    <property type="match status" value="1"/>
</dbReference>
<dbReference type="SUPFAM" id="SSF56059">
    <property type="entry name" value="Glutathione synthetase ATP-binding domain-like"/>
    <property type="match status" value="1"/>
</dbReference>
<dbReference type="SUPFAM" id="SSF52210">
    <property type="entry name" value="Succinyl-CoA synthetase domains"/>
    <property type="match status" value="1"/>
</dbReference>
<dbReference type="PROSITE" id="PS50975">
    <property type="entry name" value="ATP_GRASP"/>
    <property type="match status" value="1"/>
</dbReference>
<dbReference type="PROSITE" id="PS01217">
    <property type="entry name" value="SUCCINYL_COA_LIG_3"/>
    <property type="match status" value="1"/>
</dbReference>
<comment type="function">
    <text evidence="1">Succinyl-CoA synthetase functions in the citric acid cycle (TCA), coupling the hydrolysis of succinyl-CoA to the synthesis of either ATP or GTP and thus represents the only step of substrate-level phosphorylation in the TCA. The beta subunit provides nucleotide specificity of the enzyme and binds the substrate succinate, while the binding sites for coenzyme A and phosphate are found in the alpha subunit.</text>
</comment>
<comment type="catalytic activity">
    <reaction evidence="1">
        <text>succinate + ATP + CoA = succinyl-CoA + ADP + phosphate</text>
        <dbReference type="Rhea" id="RHEA:17661"/>
        <dbReference type="ChEBI" id="CHEBI:30031"/>
        <dbReference type="ChEBI" id="CHEBI:30616"/>
        <dbReference type="ChEBI" id="CHEBI:43474"/>
        <dbReference type="ChEBI" id="CHEBI:57287"/>
        <dbReference type="ChEBI" id="CHEBI:57292"/>
        <dbReference type="ChEBI" id="CHEBI:456216"/>
        <dbReference type="EC" id="6.2.1.5"/>
    </reaction>
    <physiologicalReaction direction="right-to-left" evidence="1">
        <dbReference type="Rhea" id="RHEA:17663"/>
    </physiologicalReaction>
</comment>
<comment type="catalytic activity">
    <reaction evidence="1">
        <text>GTP + succinate + CoA = succinyl-CoA + GDP + phosphate</text>
        <dbReference type="Rhea" id="RHEA:22120"/>
        <dbReference type="ChEBI" id="CHEBI:30031"/>
        <dbReference type="ChEBI" id="CHEBI:37565"/>
        <dbReference type="ChEBI" id="CHEBI:43474"/>
        <dbReference type="ChEBI" id="CHEBI:57287"/>
        <dbReference type="ChEBI" id="CHEBI:57292"/>
        <dbReference type="ChEBI" id="CHEBI:58189"/>
    </reaction>
    <physiologicalReaction direction="right-to-left" evidence="1">
        <dbReference type="Rhea" id="RHEA:22122"/>
    </physiologicalReaction>
</comment>
<comment type="cofactor">
    <cofactor evidence="1">
        <name>Mg(2+)</name>
        <dbReference type="ChEBI" id="CHEBI:18420"/>
    </cofactor>
    <text evidence="1">Binds 1 Mg(2+) ion per subunit.</text>
</comment>
<comment type="pathway">
    <text evidence="1">Carbohydrate metabolism; tricarboxylic acid cycle; succinate from succinyl-CoA (ligase route): step 1/1.</text>
</comment>
<comment type="subunit">
    <text evidence="1">Heterotetramer of two alpha and two beta subunits.</text>
</comment>
<comment type="similarity">
    <text evidence="1">Belongs to the succinate/malate CoA ligase beta subunit family.</text>
</comment>
<name>SUCC_ECO55</name>
<protein>
    <recommendedName>
        <fullName evidence="1">Succinate--CoA ligase [ADP-forming] subunit beta</fullName>
        <ecNumber evidence="1">6.2.1.5</ecNumber>
    </recommendedName>
    <alternativeName>
        <fullName evidence="1">Succinyl-CoA synthetase subunit beta</fullName>
        <shortName evidence="1">SCS-beta</shortName>
    </alternativeName>
</protein>
<accession>B7LAD4</accession>
<feature type="chain" id="PRO_1000197704" description="Succinate--CoA ligase [ADP-forming] subunit beta">
    <location>
        <begin position="1"/>
        <end position="388"/>
    </location>
</feature>
<feature type="domain" description="ATP-grasp" evidence="1">
    <location>
        <begin position="9"/>
        <end position="244"/>
    </location>
</feature>
<feature type="binding site" evidence="1">
    <location>
        <position position="46"/>
    </location>
    <ligand>
        <name>ATP</name>
        <dbReference type="ChEBI" id="CHEBI:30616"/>
    </ligand>
</feature>
<feature type="binding site" evidence="1">
    <location>
        <begin position="53"/>
        <end position="55"/>
    </location>
    <ligand>
        <name>ATP</name>
        <dbReference type="ChEBI" id="CHEBI:30616"/>
    </ligand>
</feature>
<feature type="binding site" evidence="1">
    <location>
        <position position="99"/>
    </location>
    <ligand>
        <name>ATP</name>
        <dbReference type="ChEBI" id="CHEBI:30616"/>
    </ligand>
</feature>
<feature type="binding site" evidence="1">
    <location>
        <position position="102"/>
    </location>
    <ligand>
        <name>ATP</name>
        <dbReference type="ChEBI" id="CHEBI:30616"/>
    </ligand>
</feature>
<feature type="binding site" evidence="1">
    <location>
        <position position="107"/>
    </location>
    <ligand>
        <name>ATP</name>
        <dbReference type="ChEBI" id="CHEBI:30616"/>
    </ligand>
</feature>
<feature type="binding site" evidence="1">
    <location>
        <position position="199"/>
    </location>
    <ligand>
        <name>Mg(2+)</name>
        <dbReference type="ChEBI" id="CHEBI:18420"/>
    </ligand>
</feature>
<feature type="binding site" evidence="1">
    <location>
        <position position="213"/>
    </location>
    <ligand>
        <name>Mg(2+)</name>
        <dbReference type="ChEBI" id="CHEBI:18420"/>
    </ligand>
</feature>
<feature type="binding site" evidence="1">
    <location>
        <position position="264"/>
    </location>
    <ligand>
        <name>substrate</name>
        <note>ligand shared with subunit alpha</note>
    </ligand>
</feature>
<feature type="binding site" evidence="1">
    <location>
        <begin position="321"/>
        <end position="323"/>
    </location>
    <ligand>
        <name>substrate</name>
        <note>ligand shared with subunit alpha</note>
    </ligand>
</feature>
<organism>
    <name type="scientific">Escherichia coli (strain 55989 / EAEC)</name>
    <dbReference type="NCBI Taxonomy" id="585055"/>
    <lineage>
        <taxon>Bacteria</taxon>
        <taxon>Pseudomonadati</taxon>
        <taxon>Pseudomonadota</taxon>
        <taxon>Gammaproteobacteria</taxon>
        <taxon>Enterobacterales</taxon>
        <taxon>Enterobacteriaceae</taxon>
        <taxon>Escherichia</taxon>
    </lineage>
</organism>
<reference key="1">
    <citation type="journal article" date="2009" name="PLoS Genet.">
        <title>Organised genome dynamics in the Escherichia coli species results in highly diverse adaptive paths.</title>
        <authorList>
            <person name="Touchon M."/>
            <person name="Hoede C."/>
            <person name="Tenaillon O."/>
            <person name="Barbe V."/>
            <person name="Baeriswyl S."/>
            <person name="Bidet P."/>
            <person name="Bingen E."/>
            <person name="Bonacorsi S."/>
            <person name="Bouchier C."/>
            <person name="Bouvet O."/>
            <person name="Calteau A."/>
            <person name="Chiapello H."/>
            <person name="Clermont O."/>
            <person name="Cruveiller S."/>
            <person name="Danchin A."/>
            <person name="Diard M."/>
            <person name="Dossat C."/>
            <person name="Karoui M.E."/>
            <person name="Frapy E."/>
            <person name="Garry L."/>
            <person name="Ghigo J.M."/>
            <person name="Gilles A.M."/>
            <person name="Johnson J."/>
            <person name="Le Bouguenec C."/>
            <person name="Lescat M."/>
            <person name="Mangenot S."/>
            <person name="Martinez-Jehanne V."/>
            <person name="Matic I."/>
            <person name="Nassif X."/>
            <person name="Oztas S."/>
            <person name="Petit M.A."/>
            <person name="Pichon C."/>
            <person name="Rouy Z."/>
            <person name="Ruf C.S."/>
            <person name="Schneider D."/>
            <person name="Tourret J."/>
            <person name="Vacherie B."/>
            <person name="Vallenet D."/>
            <person name="Medigue C."/>
            <person name="Rocha E.P.C."/>
            <person name="Denamur E."/>
        </authorList>
    </citation>
    <scope>NUCLEOTIDE SEQUENCE [LARGE SCALE GENOMIC DNA]</scope>
    <source>
        <strain>55989 / EAEC</strain>
    </source>
</reference>
<sequence>MNLHEYQAKQLFARYGLPAPVGYACTTPREAEEAASKIGAGPWVVKCQVHAGGRGKAGGVKVVNSKEDIRAFAENWLGKRLVTYQTDANGQPVNQILVEAATDIAKELYLGAVVDRSSRRVVFMASTEGGVEIEKVAEETPHLIHKVALDPLTGPMPYQGRELAFKLGLEGKLVQQFTKIFMGLATIFLERDLALIEINPLVITKQGDLICLDGKLGADGNALFRQPDLREMRDQSQEDPREAQAAQWELNYVALDGNIGCMVNGAGLAMGTMDIVKLHGGEPANFLDVGGGATKERVTEAFKIILSDDKVKAVLVNIFGGIVRCDLIADGIIGAVAEVGVNVPVVVRLEGNNAELGAKKLADSGLNIIAAKGLTDAAQQVVAAVEGK</sequence>